<comment type="function">
    <text evidence="1">Acts as a chaperone.</text>
</comment>
<comment type="induction">
    <text evidence="1">By stress conditions e.g. heat shock.</text>
</comment>
<comment type="similarity">
    <text evidence="1">Belongs to the heat shock protein 70 family.</text>
</comment>
<comment type="sequence caution" evidence="3">
    <conflict type="erroneous initiation">
        <sequence resource="EMBL-CDS" id="AAU37505"/>
    </conflict>
</comment>
<dbReference type="EMBL" id="AE016827">
    <property type="protein sequence ID" value="AAU37505.1"/>
    <property type="status" value="ALT_INIT"/>
    <property type="molecule type" value="Genomic_DNA"/>
</dbReference>
<dbReference type="RefSeq" id="WP_041639656.1">
    <property type="nucleotide sequence ID" value="NC_006300.1"/>
</dbReference>
<dbReference type="SMR" id="Q65U55"/>
<dbReference type="STRING" id="221988.MS0898"/>
<dbReference type="KEGG" id="msu:MS0898"/>
<dbReference type="eggNOG" id="COG0443">
    <property type="taxonomic scope" value="Bacteria"/>
</dbReference>
<dbReference type="HOGENOM" id="CLU_005965_2_1_6"/>
<dbReference type="OrthoDB" id="9766019at2"/>
<dbReference type="Proteomes" id="UP000000607">
    <property type="component" value="Chromosome"/>
</dbReference>
<dbReference type="GO" id="GO:0005524">
    <property type="term" value="F:ATP binding"/>
    <property type="evidence" value="ECO:0007669"/>
    <property type="project" value="UniProtKB-UniRule"/>
</dbReference>
<dbReference type="GO" id="GO:0140662">
    <property type="term" value="F:ATP-dependent protein folding chaperone"/>
    <property type="evidence" value="ECO:0007669"/>
    <property type="project" value="InterPro"/>
</dbReference>
<dbReference type="GO" id="GO:0051082">
    <property type="term" value="F:unfolded protein binding"/>
    <property type="evidence" value="ECO:0007669"/>
    <property type="project" value="InterPro"/>
</dbReference>
<dbReference type="CDD" id="cd10234">
    <property type="entry name" value="ASKHA_NBD_HSP70_DnaK-like"/>
    <property type="match status" value="1"/>
</dbReference>
<dbReference type="FunFam" id="2.60.34.10:FF:000014">
    <property type="entry name" value="Chaperone protein DnaK HSP70"/>
    <property type="match status" value="1"/>
</dbReference>
<dbReference type="FunFam" id="3.30.30.30:FF:000003">
    <property type="entry name" value="Heat shock protein 9"/>
    <property type="match status" value="1"/>
</dbReference>
<dbReference type="FunFam" id="1.20.1270.10:FF:000001">
    <property type="entry name" value="Molecular chaperone DnaK"/>
    <property type="match status" value="1"/>
</dbReference>
<dbReference type="FunFam" id="3.30.420.40:FF:000004">
    <property type="entry name" value="Molecular chaperone DnaK"/>
    <property type="match status" value="1"/>
</dbReference>
<dbReference type="FunFam" id="3.90.640.10:FF:000003">
    <property type="entry name" value="Molecular chaperone DnaK"/>
    <property type="match status" value="1"/>
</dbReference>
<dbReference type="Gene3D" id="1.20.1270.10">
    <property type="match status" value="1"/>
</dbReference>
<dbReference type="Gene3D" id="3.30.420.40">
    <property type="match status" value="2"/>
</dbReference>
<dbReference type="Gene3D" id="3.90.640.10">
    <property type="entry name" value="Actin, Chain A, domain 4"/>
    <property type="match status" value="1"/>
</dbReference>
<dbReference type="Gene3D" id="2.60.34.10">
    <property type="entry name" value="Substrate Binding Domain Of DNAk, Chain A, domain 1"/>
    <property type="match status" value="1"/>
</dbReference>
<dbReference type="HAMAP" id="MF_00332">
    <property type="entry name" value="DnaK"/>
    <property type="match status" value="1"/>
</dbReference>
<dbReference type="InterPro" id="IPR043129">
    <property type="entry name" value="ATPase_NBD"/>
</dbReference>
<dbReference type="InterPro" id="IPR012725">
    <property type="entry name" value="Chaperone_DnaK"/>
</dbReference>
<dbReference type="InterPro" id="IPR018181">
    <property type="entry name" value="Heat_shock_70_CS"/>
</dbReference>
<dbReference type="InterPro" id="IPR029048">
    <property type="entry name" value="HSP70_C_sf"/>
</dbReference>
<dbReference type="InterPro" id="IPR029047">
    <property type="entry name" value="HSP70_peptide-bd_sf"/>
</dbReference>
<dbReference type="InterPro" id="IPR013126">
    <property type="entry name" value="Hsp_70_fam"/>
</dbReference>
<dbReference type="NCBIfam" id="NF001413">
    <property type="entry name" value="PRK00290.1"/>
    <property type="match status" value="1"/>
</dbReference>
<dbReference type="NCBIfam" id="NF003520">
    <property type="entry name" value="PRK05183.1"/>
    <property type="match status" value="1"/>
</dbReference>
<dbReference type="NCBIfam" id="TIGR02350">
    <property type="entry name" value="prok_dnaK"/>
    <property type="match status" value="1"/>
</dbReference>
<dbReference type="PANTHER" id="PTHR19375">
    <property type="entry name" value="HEAT SHOCK PROTEIN 70KDA"/>
    <property type="match status" value="1"/>
</dbReference>
<dbReference type="Pfam" id="PF00012">
    <property type="entry name" value="HSP70"/>
    <property type="match status" value="1"/>
</dbReference>
<dbReference type="PRINTS" id="PR00301">
    <property type="entry name" value="HEATSHOCK70"/>
</dbReference>
<dbReference type="SUPFAM" id="SSF53067">
    <property type="entry name" value="Actin-like ATPase domain"/>
    <property type="match status" value="2"/>
</dbReference>
<dbReference type="SUPFAM" id="SSF100934">
    <property type="entry name" value="Heat shock protein 70kD (HSP70), C-terminal subdomain"/>
    <property type="match status" value="1"/>
</dbReference>
<dbReference type="SUPFAM" id="SSF100920">
    <property type="entry name" value="Heat shock protein 70kD (HSP70), peptide-binding domain"/>
    <property type="match status" value="1"/>
</dbReference>
<dbReference type="PROSITE" id="PS00297">
    <property type="entry name" value="HSP70_1"/>
    <property type="match status" value="1"/>
</dbReference>
<dbReference type="PROSITE" id="PS00329">
    <property type="entry name" value="HSP70_2"/>
    <property type="match status" value="1"/>
</dbReference>
<dbReference type="PROSITE" id="PS01036">
    <property type="entry name" value="HSP70_3"/>
    <property type="match status" value="1"/>
</dbReference>
<evidence type="ECO:0000255" key="1">
    <source>
        <dbReference type="HAMAP-Rule" id="MF_00332"/>
    </source>
</evidence>
<evidence type="ECO:0000256" key="2">
    <source>
        <dbReference type="SAM" id="MobiDB-lite"/>
    </source>
</evidence>
<evidence type="ECO:0000305" key="3"/>
<gene>
    <name evidence="1" type="primary">dnaK</name>
    <name type="ordered locus">MS0898</name>
</gene>
<reference key="1">
    <citation type="journal article" date="2004" name="Nat. Biotechnol.">
        <title>The genome sequence of the capnophilic rumen bacterium Mannheimia succiniciproducens.</title>
        <authorList>
            <person name="Hong S.H."/>
            <person name="Kim J.S."/>
            <person name="Lee S.Y."/>
            <person name="In Y.H."/>
            <person name="Choi S.S."/>
            <person name="Rih J.-K."/>
            <person name="Kim C.H."/>
            <person name="Jeong H."/>
            <person name="Hur C.G."/>
            <person name="Kim J.J."/>
        </authorList>
    </citation>
    <scope>NUCLEOTIDE SEQUENCE [LARGE SCALE GENOMIC DNA]</scope>
    <source>
        <strain>KCTC 0769BP / MBEL55E</strain>
    </source>
</reference>
<feature type="chain" id="PRO_0000225976" description="Chaperone protein DnaK">
    <location>
        <begin position="1"/>
        <end position="636"/>
    </location>
</feature>
<feature type="region of interest" description="Disordered" evidence="2">
    <location>
        <begin position="599"/>
        <end position="636"/>
    </location>
</feature>
<feature type="compositionally biased region" description="Low complexity" evidence="2">
    <location>
        <begin position="600"/>
        <end position="617"/>
    </location>
</feature>
<feature type="modified residue" description="Phosphothreonine; by autocatalysis" evidence="1">
    <location>
        <position position="199"/>
    </location>
</feature>
<name>DNAK_MANSM</name>
<keyword id="KW-0067">ATP-binding</keyword>
<keyword id="KW-0143">Chaperone</keyword>
<keyword id="KW-0547">Nucleotide-binding</keyword>
<keyword id="KW-0597">Phosphoprotein</keyword>
<keyword id="KW-0346">Stress response</keyword>
<protein>
    <recommendedName>
        <fullName evidence="1">Chaperone protein DnaK</fullName>
    </recommendedName>
    <alternativeName>
        <fullName evidence="1">HSP70</fullName>
    </alternativeName>
    <alternativeName>
        <fullName evidence="1">Heat shock 70 kDa protein</fullName>
    </alternativeName>
    <alternativeName>
        <fullName evidence="1">Heat shock protein 70</fullName>
    </alternativeName>
</protein>
<proteinExistence type="inferred from homology"/>
<sequence>MGKIIGIDLGTTNSCVAVMDGDKPRVIENAEGERTTPSIIAYTQDNEVLVGQPAKRQAVTNPKNTLFAIKRLIGRRFEDQEVQRDVNIMPFQIIKADNGDAWVDVKGDKLAPPQISAEVLKKMKKTAEDFLGETVTEAVITVPAYFNDAQRQATKDAGRIAGLEVKRIINEPTAAALAYGLDKGKGNQTIAVYDLGGGTFDLSIIEIDEVGGEKTFEVLATNGDTHLGGEDFDNRVINYLVDEFKKEQGVDLRNDPLAMQRLKEAGEKAKIELSSAQQTDVNLPYITADATGPKHLNIKLTRAKLEALVEDLVARSMEPVKVALSDAGLSVSQIDDVILVGGQTRMPLVQQKVAEFFGKEPRKDVNPDEAVAVGAAVQGGVLAGNVTDVLLLDVTPLSLGIETMGGVMTTLIEKNTTIPTKKSQVFSTAEDNQSAVTIHVLQGERKQASANKSLGQFNLEGINPAPRGMPQIEVTFDIDADGIIHVSAKDKGTGKEQQITIKASSGLSDEEIQQMVRDAEANAEADRKFEELVQARNQADALVHSTRKQLTEAGDKLSADDKAPIEKAVNELEAAAKGEDKAEIEAKIQALIQVSEKLMQAAQQQAQADAGAQQAQGNNGGDDVVDAEFEEVKDNK</sequence>
<organism>
    <name type="scientific">Mannheimia succiniciproducens (strain KCTC 0769BP / MBEL55E)</name>
    <dbReference type="NCBI Taxonomy" id="221988"/>
    <lineage>
        <taxon>Bacteria</taxon>
        <taxon>Pseudomonadati</taxon>
        <taxon>Pseudomonadota</taxon>
        <taxon>Gammaproteobacteria</taxon>
        <taxon>Pasteurellales</taxon>
        <taxon>Pasteurellaceae</taxon>
        <taxon>Basfia</taxon>
    </lineage>
</organism>
<accession>Q65U55</accession>